<proteinExistence type="inferred from homology"/>
<sequence>MDLKQYVSEVQDWPKPGVSFKDITTIMDNGEAYGYATDKIVEYAKDRDVDIVVGPEARGFIIGCPVAYSMGIGFAPVRKEGKLPREVIRYEYDLEYGTNVLTMHKDAIKPGQRVLITDDLLATGGTIEAAIKLVEKLGGIVVGIAFIIELKYLNGIEKIKDYDVMSLISYDE</sequence>
<keyword id="KW-0963">Cytoplasm</keyword>
<keyword id="KW-0328">Glycosyltransferase</keyword>
<keyword id="KW-0660">Purine salvage</keyword>
<keyword id="KW-0808">Transferase</keyword>
<dbReference type="EC" id="2.4.2.7" evidence="1"/>
<dbReference type="EMBL" id="BA000033">
    <property type="protein sequence ID" value="BAB95450.1"/>
    <property type="molecule type" value="Genomic_DNA"/>
</dbReference>
<dbReference type="RefSeq" id="WP_000364542.1">
    <property type="nucleotide sequence ID" value="NC_003923.1"/>
</dbReference>
<dbReference type="SMR" id="P68781"/>
<dbReference type="KEGG" id="sam:MW1585"/>
<dbReference type="HOGENOM" id="CLU_063339_3_0_9"/>
<dbReference type="UniPathway" id="UPA00588">
    <property type="reaction ID" value="UER00646"/>
</dbReference>
<dbReference type="GO" id="GO:0005737">
    <property type="term" value="C:cytoplasm"/>
    <property type="evidence" value="ECO:0007669"/>
    <property type="project" value="UniProtKB-SubCell"/>
</dbReference>
<dbReference type="GO" id="GO:0002055">
    <property type="term" value="F:adenine binding"/>
    <property type="evidence" value="ECO:0007669"/>
    <property type="project" value="TreeGrafter"/>
</dbReference>
<dbReference type="GO" id="GO:0003999">
    <property type="term" value="F:adenine phosphoribosyltransferase activity"/>
    <property type="evidence" value="ECO:0007669"/>
    <property type="project" value="UniProtKB-UniRule"/>
</dbReference>
<dbReference type="GO" id="GO:0016208">
    <property type="term" value="F:AMP binding"/>
    <property type="evidence" value="ECO:0007669"/>
    <property type="project" value="TreeGrafter"/>
</dbReference>
<dbReference type="GO" id="GO:0006168">
    <property type="term" value="P:adenine salvage"/>
    <property type="evidence" value="ECO:0007669"/>
    <property type="project" value="InterPro"/>
</dbReference>
<dbReference type="GO" id="GO:0044209">
    <property type="term" value="P:AMP salvage"/>
    <property type="evidence" value="ECO:0007669"/>
    <property type="project" value="UniProtKB-UniRule"/>
</dbReference>
<dbReference type="GO" id="GO:0006166">
    <property type="term" value="P:purine ribonucleoside salvage"/>
    <property type="evidence" value="ECO:0007669"/>
    <property type="project" value="UniProtKB-KW"/>
</dbReference>
<dbReference type="CDD" id="cd06223">
    <property type="entry name" value="PRTases_typeI"/>
    <property type="match status" value="1"/>
</dbReference>
<dbReference type="FunFam" id="3.40.50.2020:FF:000004">
    <property type="entry name" value="Adenine phosphoribosyltransferase"/>
    <property type="match status" value="1"/>
</dbReference>
<dbReference type="Gene3D" id="3.40.50.2020">
    <property type="match status" value="1"/>
</dbReference>
<dbReference type="HAMAP" id="MF_00004">
    <property type="entry name" value="Aden_phosphoribosyltr"/>
    <property type="match status" value="1"/>
</dbReference>
<dbReference type="InterPro" id="IPR005764">
    <property type="entry name" value="Ade_phspho_trans"/>
</dbReference>
<dbReference type="InterPro" id="IPR000836">
    <property type="entry name" value="PRibTrfase_dom"/>
</dbReference>
<dbReference type="InterPro" id="IPR029057">
    <property type="entry name" value="PRTase-like"/>
</dbReference>
<dbReference type="InterPro" id="IPR050054">
    <property type="entry name" value="UPRTase/APRTase"/>
</dbReference>
<dbReference type="NCBIfam" id="TIGR01090">
    <property type="entry name" value="apt"/>
    <property type="match status" value="1"/>
</dbReference>
<dbReference type="NCBIfam" id="NF002633">
    <property type="entry name" value="PRK02304.1-2"/>
    <property type="match status" value="1"/>
</dbReference>
<dbReference type="NCBIfam" id="NF002634">
    <property type="entry name" value="PRK02304.1-3"/>
    <property type="match status" value="1"/>
</dbReference>
<dbReference type="NCBIfam" id="NF002636">
    <property type="entry name" value="PRK02304.1-5"/>
    <property type="match status" value="1"/>
</dbReference>
<dbReference type="PANTHER" id="PTHR32315">
    <property type="entry name" value="ADENINE PHOSPHORIBOSYLTRANSFERASE"/>
    <property type="match status" value="1"/>
</dbReference>
<dbReference type="PANTHER" id="PTHR32315:SF3">
    <property type="entry name" value="ADENINE PHOSPHORIBOSYLTRANSFERASE"/>
    <property type="match status" value="1"/>
</dbReference>
<dbReference type="Pfam" id="PF00156">
    <property type="entry name" value="Pribosyltran"/>
    <property type="match status" value="1"/>
</dbReference>
<dbReference type="SUPFAM" id="SSF53271">
    <property type="entry name" value="PRTase-like"/>
    <property type="match status" value="1"/>
</dbReference>
<reference key="1">
    <citation type="journal article" date="2002" name="Lancet">
        <title>Genome and virulence determinants of high virulence community-acquired MRSA.</title>
        <authorList>
            <person name="Baba T."/>
            <person name="Takeuchi F."/>
            <person name="Kuroda M."/>
            <person name="Yuzawa H."/>
            <person name="Aoki K."/>
            <person name="Oguchi A."/>
            <person name="Nagai Y."/>
            <person name="Iwama N."/>
            <person name="Asano K."/>
            <person name="Naimi T."/>
            <person name="Kuroda H."/>
            <person name="Cui L."/>
            <person name="Yamamoto K."/>
            <person name="Hiramatsu K."/>
        </authorList>
    </citation>
    <scope>NUCLEOTIDE SEQUENCE [LARGE SCALE GENOMIC DNA]</scope>
    <source>
        <strain>MW2</strain>
    </source>
</reference>
<feature type="chain" id="PRO_0000149455" description="Adenine phosphoribosyltransferase">
    <location>
        <begin position="1"/>
        <end position="172"/>
    </location>
</feature>
<comment type="function">
    <text evidence="1">Catalyzes a salvage reaction resulting in the formation of AMP, that is energically less costly than de novo synthesis.</text>
</comment>
<comment type="catalytic activity">
    <reaction evidence="1">
        <text>AMP + diphosphate = 5-phospho-alpha-D-ribose 1-diphosphate + adenine</text>
        <dbReference type="Rhea" id="RHEA:16609"/>
        <dbReference type="ChEBI" id="CHEBI:16708"/>
        <dbReference type="ChEBI" id="CHEBI:33019"/>
        <dbReference type="ChEBI" id="CHEBI:58017"/>
        <dbReference type="ChEBI" id="CHEBI:456215"/>
        <dbReference type="EC" id="2.4.2.7"/>
    </reaction>
</comment>
<comment type="pathway">
    <text evidence="1">Purine metabolism; AMP biosynthesis via salvage pathway; AMP from adenine: step 1/1.</text>
</comment>
<comment type="subunit">
    <text evidence="1">Homodimer.</text>
</comment>
<comment type="subcellular location">
    <subcellularLocation>
        <location evidence="1">Cytoplasm</location>
    </subcellularLocation>
</comment>
<comment type="similarity">
    <text evidence="1">Belongs to the purine/pyrimidine phosphoribosyltransferase family.</text>
</comment>
<name>APT_STAAW</name>
<organism>
    <name type="scientific">Staphylococcus aureus (strain MW2)</name>
    <dbReference type="NCBI Taxonomy" id="196620"/>
    <lineage>
        <taxon>Bacteria</taxon>
        <taxon>Bacillati</taxon>
        <taxon>Bacillota</taxon>
        <taxon>Bacilli</taxon>
        <taxon>Bacillales</taxon>
        <taxon>Staphylococcaceae</taxon>
        <taxon>Staphylococcus</taxon>
    </lineage>
</organism>
<evidence type="ECO:0000255" key="1">
    <source>
        <dbReference type="HAMAP-Rule" id="MF_00004"/>
    </source>
</evidence>
<accession>P68781</accession>
<accession>O32418</accession>
<gene>
    <name evidence="1" type="primary">apt</name>
    <name type="ordered locus">MW1585</name>
</gene>
<protein>
    <recommendedName>
        <fullName evidence="1">Adenine phosphoribosyltransferase</fullName>
        <shortName evidence="1">APRT</shortName>
        <ecNumber evidence="1">2.4.2.7</ecNumber>
    </recommendedName>
</protein>